<comment type="function">
    <text evidence="1">Forms part of the ribosomal stalk, playing a central role in the interaction of the ribosome with GTP-bound translation factors.</text>
</comment>
<comment type="subunit">
    <text evidence="1">Part of the ribosomal stalk of the 50S ribosomal subunit. The N-terminus interacts with L11 and the large rRNA to form the base of the stalk. The C-terminus forms an elongated spine to which L12 dimers bind in a sequential fashion forming a multimeric L10(L12)X complex.</text>
</comment>
<comment type="similarity">
    <text evidence="1">Belongs to the universal ribosomal protein uL10 family.</text>
</comment>
<organism>
    <name type="scientific">Listeria welshimeri serovar 6b (strain ATCC 35897 / DSM 20650 / CCUG 15529 / CIP 8149 / NCTC 11857 / SLCC 5334 / V8)</name>
    <dbReference type="NCBI Taxonomy" id="386043"/>
    <lineage>
        <taxon>Bacteria</taxon>
        <taxon>Bacillati</taxon>
        <taxon>Bacillota</taxon>
        <taxon>Bacilli</taxon>
        <taxon>Bacillales</taxon>
        <taxon>Listeriaceae</taxon>
        <taxon>Listeria</taxon>
    </lineage>
</organism>
<protein>
    <recommendedName>
        <fullName evidence="1">Large ribosomal subunit protein uL10</fullName>
    </recommendedName>
    <alternativeName>
        <fullName evidence="2">50S ribosomal protein L10</fullName>
    </alternativeName>
</protein>
<evidence type="ECO:0000255" key="1">
    <source>
        <dbReference type="HAMAP-Rule" id="MF_00362"/>
    </source>
</evidence>
<evidence type="ECO:0000305" key="2"/>
<accession>A0AF49</accession>
<name>RL10_LISW6</name>
<dbReference type="EMBL" id="AM263198">
    <property type="protein sequence ID" value="CAK19631.1"/>
    <property type="molecule type" value="Genomic_DNA"/>
</dbReference>
<dbReference type="RefSeq" id="WP_003723030.1">
    <property type="nucleotide sequence ID" value="NC_008555.1"/>
</dbReference>
<dbReference type="SMR" id="A0AF49"/>
<dbReference type="STRING" id="386043.lwe0213"/>
<dbReference type="GeneID" id="93238164"/>
<dbReference type="KEGG" id="lwe:lwe0213"/>
<dbReference type="eggNOG" id="COG0244">
    <property type="taxonomic scope" value="Bacteria"/>
</dbReference>
<dbReference type="HOGENOM" id="CLU_092227_2_0_9"/>
<dbReference type="OrthoDB" id="9808307at2"/>
<dbReference type="Proteomes" id="UP000000779">
    <property type="component" value="Chromosome"/>
</dbReference>
<dbReference type="GO" id="GO:0015934">
    <property type="term" value="C:large ribosomal subunit"/>
    <property type="evidence" value="ECO:0007669"/>
    <property type="project" value="InterPro"/>
</dbReference>
<dbReference type="GO" id="GO:0070180">
    <property type="term" value="F:large ribosomal subunit rRNA binding"/>
    <property type="evidence" value="ECO:0007669"/>
    <property type="project" value="UniProtKB-UniRule"/>
</dbReference>
<dbReference type="GO" id="GO:0003735">
    <property type="term" value="F:structural constituent of ribosome"/>
    <property type="evidence" value="ECO:0007669"/>
    <property type="project" value="InterPro"/>
</dbReference>
<dbReference type="GO" id="GO:0006412">
    <property type="term" value="P:translation"/>
    <property type="evidence" value="ECO:0007669"/>
    <property type="project" value="UniProtKB-UniRule"/>
</dbReference>
<dbReference type="CDD" id="cd05797">
    <property type="entry name" value="Ribosomal_L10"/>
    <property type="match status" value="1"/>
</dbReference>
<dbReference type="FunFam" id="3.30.70.1730:FF:000001">
    <property type="entry name" value="50S ribosomal protein L10"/>
    <property type="match status" value="1"/>
</dbReference>
<dbReference type="Gene3D" id="3.30.70.1730">
    <property type="match status" value="1"/>
</dbReference>
<dbReference type="HAMAP" id="MF_00362">
    <property type="entry name" value="Ribosomal_uL10"/>
    <property type="match status" value="1"/>
</dbReference>
<dbReference type="InterPro" id="IPR001790">
    <property type="entry name" value="Ribosomal_uL10"/>
</dbReference>
<dbReference type="InterPro" id="IPR043141">
    <property type="entry name" value="Ribosomal_uL10-like_sf"/>
</dbReference>
<dbReference type="InterPro" id="IPR022973">
    <property type="entry name" value="Ribosomal_uL10_bac"/>
</dbReference>
<dbReference type="InterPro" id="IPR047865">
    <property type="entry name" value="Ribosomal_uL10_bac_type"/>
</dbReference>
<dbReference type="InterPro" id="IPR002363">
    <property type="entry name" value="Ribosomal_uL10_CS_bac"/>
</dbReference>
<dbReference type="NCBIfam" id="NF000955">
    <property type="entry name" value="PRK00099.1-1"/>
    <property type="match status" value="1"/>
</dbReference>
<dbReference type="PANTHER" id="PTHR11560">
    <property type="entry name" value="39S RIBOSOMAL PROTEIN L10, MITOCHONDRIAL"/>
    <property type="match status" value="1"/>
</dbReference>
<dbReference type="Pfam" id="PF00466">
    <property type="entry name" value="Ribosomal_L10"/>
    <property type="match status" value="1"/>
</dbReference>
<dbReference type="SUPFAM" id="SSF160369">
    <property type="entry name" value="Ribosomal protein L10-like"/>
    <property type="match status" value="1"/>
</dbReference>
<dbReference type="PROSITE" id="PS01109">
    <property type="entry name" value="RIBOSOMAL_L10"/>
    <property type="match status" value="1"/>
</dbReference>
<sequence>MSKVLEAKQSAVEEIKTKLSASASTVIVDYRGLNVGEITELRKQLRDAGIEFKVYKNSLTRRAVEANGYEGLEGALTGPNAIAFSNEDVVAPAKILNDFAKDHEALEIKAGVIEGKVASLEEIKALATLPSREGLLSMLCNVLQAPVRGLAIATKAVADQKEGQEA</sequence>
<keyword id="KW-0687">Ribonucleoprotein</keyword>
<keyword id="KW-0689">Ribosomal protein</keyword>
<keyword id="KW-0694">RNA-binding</keyword>
<keyword id="KW-0699">rRNA-binding</keyword>
<gene>
    <name evidence="1" type="primary">rplJ</name>
    <name type="ordered locus">lwe0213</name>
</gene>
<feature type="chain" id="PRO_1000005528" description="Large ribosomal subunit protein uL10">
    <location>
        <begin position="1"/>
        <end position="166"/>
    </location>
</feature>
<proteinExistence type="inferred from homology"/>
<reference key="1">
    <citation type="journal article" date="2006" name="J. Bacteriol.">
        <title>Whole-genome sequence of Listeria welshimeri reveals common steps in genome reduction with Listeria innocua as compared to Listeria monocytogenes.</title>
        <authorList>
            <person name="Hain T."/>
            <person name="Steinweg C."/>
            <person name="Kuenne C.T."/>
            <person name="Billion A."/>
            <person name="Ghai R."/>
            <person name="Chatterjee S.S."/>
            <person name="Domann E."/>
            <person name="Kaerst U."/>
            <person name="Goesmann A."/>
            <person name="Bekel T."/>
            <person name="Bartels D."/>
            <person name="Kaiser O."/>
            <person name="Meyer F."/>
            <person name="Puehler A."/>
            <person name="Weisshaar B."/>
            <person name="Wehland J."/>
            <person name="Liang C."/>
            <person name="Dandekar T."/>
            <person name="Lampidis R."/>
            <person name="Kreft J."/>
            <person name="Goebel W."/>
            <person name="Chakraborty T."/>
        </authorList>
    </citation>
    <scope>NUCLEOTIDE SEQUENCE [LARGE SCALE GENOMIC DNA]</scope>
    <source>
        <strain>ATCC 35897 / DSM 20650 / CCUG 15529 / CIP 8149 / NCTC 11857 / SLCC 5334 / V8</strain>
    </source>
</reference>